<organism>
    <name type="scientific">Homo sapiens</name>
    <name type="common">Human</name>
    <dbReference type="NCBI Taxonomy" id="9606"/>
    <lineage>
        <taxon>Eukaryota</taxon>
        <taxon>Metazoa</taxon>
        <taxon>Chordata</taxon>
        <taxon>Craniata</taxon>
        <taxon>Vertebrata</taxon>
        <taxon>Euteleostomi</taxon>
        <taxon>Mammalia</taxon>
        <taxon>Eutheria</taxon>
        <taxon>Euarchontoglires</taxon>
        <taxon>Primates</taxon>
        <taxon>Haplorrhini</taxon>
        <taxon>Catarrhini</taxon>
        <taxon>Hominidae</taxon>
        <taxon>Homo</taxon>
    </lineage>
</organism>
<comment type="function">
    <text>Could act as a modulator of transcription.</text>
</comment>
<comment type="tissue specificity">
    <text evidence="4">Not detected in any normal tissues. Expressed in a melanoma cell line.</text>
</comment>
<comment type="similarity">
    <text evidence="5">Belongs to the SSX family.</text>
</comment>
<comment type="caution">
    <text evidence="5">Could be the product of a pseudogene.</text>
</comment>
<feature type="chain" id="PRO_0000227810" description="Putative protein SSX6">
    <location>
        <begin position="1"/>
        <end position="188"/>
    </location>
</feature>
<feature type="domain" description="KRAB-related" evidence="2">
    <location>
        <begin position="20"/>
        <end position="83"/>
    </location>
</feature>
<feature type="region of interest" description="Disordered" evidence="3">
    <location>
        <begin position="1"/>
        <end position="22"/>
    </location>
</feature>
<feature type="region of interest" description="Disordered" evidence="3">
    <location>
        <begin position="74"/>
        <end position="188"/>
    </location>
</feature>
<feature type="compositionally biased region" description="Basic and acidic residues" evidence="3">
    <location>
        <begin position="75"/>
        <end position="96"/>
    </location>
</feature>
<feature type="compositionally biased region" description="Basic and acidic residues" evidence="3">
    <location>
        <begin position="112"/>
        <end position="122"/>
    </location>
</feature>
<feature type="compositionally biased region" description="Basic and acidic residues" evidence="3">
    <location>
        <begin position="147"/>
        <end position="156"/>
    </location>
</feature>
<feature type="compositionally biased region" description="Basic residues" evidence="3">
    <location>
        <begin position="157"/>
        <end position="170"/>
    </location>
</feature>
<feature type="compositionally biased region" description="Acidic residues" evidence="3">
    <location>
        <begin position="179"/>
        <end position="188"/>
    </location>
</feature>
<feature type="modified residue" description="Phosphoserine" evidence="1">
    <location>
        <position position="123"/>
    </location>
</feature>
<feature type="sequence variant" id="VAR_053692" description="In dbSNP:rs5952474.">
    <original>R</original>
    <variation>C</variation>
    <location>
        <position position="90"/>
    </location>
</feature>
<feature type="sequence variant" id="VAR_053693" description="In dbSNP:rs17327911.">
    <original>K</original>
    <variation>Q</variation>
    <location>
        <position position="138"/>
    </location>
</feature>
<sequence length="188" mass="21688">MNGDDAFAKRPRDDAKASEKRSKAFDDIAKYFSKEEWEKMKFSEKISCVHMKRKYEAMTKLGFNVTLSLFMRNKRATDSQRNDSDNDRNRGNEVERPQMTFGRLQRIIPKIMPEKPAEEGSDSKGVPEASGPQNDGKKLCPPGKASSSEKIHERSGPKRGKHAWTHRLRERKQLVIYEEISDPEEDDK</sequence>
<gene>
    <name evidence="6" type="primary">SSX6P</name>
    <name type="synonym">SSX6</name>
</gene>
<evidence type="ECO:0000250" key="1">
    <source>
        <dbReference type="UniProtKB" id="Q16384"/>
    </source>
</evidence>
<evidence type="ECO:0000255" key="2">
    <source>
        <dbReference type="PROSITE-ProRule" id="PRU00120"/>
    </source>
</evidence>
<evidence type="ECO:0000256" key="3">
    <source>
        <dbReference type="SAM" id="MobiDB-lite"/>
    </source>
</evidence>
<evidence type="ECO:0000269" key="4">
    <source>
    </source>
</evidence>
<evidence type="ECO:0000305" key="5"/>
<evidence type="ECO:0000312" key="6">
    <source>
        <dbReference type="HGNC" id="HGNC:19652"/>
    </source>
</evidence>
<proteinExistence type="uncertain"/>
<accession>Q7RTT6</accession>
<keyword id="KW-0597">Phosphoprotein</keyword>
<keyword id="KW-1185">Reference proteome</keyword>
<keyword id="KW-0804">Transcription</keyword>
<keyword id="KW-0805">Transcription regulation</keyword>
<dbReference type="EMBL" id="AL356464">
    <property type="protein sequence ID" value="CAI40525.1"/>
    <property type="molecule type" value="Genomic_DNA"/>
</dbReference>
<dbReference type="EMBL" id="Z98304">
    <property type="protein sequence ID" value="CAI40525.1"/>
    <property type="status" value="JOINED"/>
    <property type="molecule type" value="Genomic_DNA"/>
</dbReference>
<dbReference type="EMBL" id="BK000686">
    <property type="protein sequence ID" value="DAA00373.1"/>
    <property type="molecule type" value="Genomic_DNA"/>
</dbReference>
<dbReference type="FunCoup" id="Q7RTT6">
    <property type="interactions" value="305"/>
</dbReference>
<dbReference type="IntAct" id="Q7RTT6">
    <property type="interactions" value="7"/>
</dbReference>
<dbReference type="GlyGen" id="Q7RTT6">
    <property type="glycosylation" value="1 site, 1 O-linked glycan (1 site)"/>
</dbReference>
<dbReference type="iPTMnet" id="Q7RTT6"/>
<dbReference type="PhosphoSitePlus" id="Q7RTT6"/>
<dbReference type="BioMuta" id="HGNC:19652"/>
<dbReference type="DMDM" id="74759050"/>
<dbReference type="MassIVE" id="Q7RTT6"/>
<dbReference type="PeptideAtlas" id="Q7RTT6"/>
<dbReference type="AGR" id="HGNC:19652"/>
<dbReference type="GeneCards" id="SSX6P"/>
<dbReference type="HGNC" id="HGNC:19652">
    <property type="gene designation" value="SSX6P"/>
</dbReference>
<dbReference type="MIM" id="300541">
    <property type="type" value="gene"/>
</dbReference>
<dbReference type="neXtProt" id="NX_Q7RTT6"/>
<dbReference type="InParanoid" id="Q7RTT6"/>
<dbReference type="PAN-GO" id="Q7RTT6">
    <property type="GO annotations" value="1 GO annotation based on evolutionary models"/>
</dbReference>
<dbReference type="PhylomeDB" id="Q7RTT6"/>
<dbReference type="TreeFam" id="TF338517"/>
<dbReference type="PathwayCommons" id="Q7RTT6"/>
<dbReference type="SignaLink" id="Q7RTT6"/>
<dbReference type="Pharos" id="Q7RTT6">
    <property type="development level" value="Tdark"/>
</dbReference>
<dbReference type="PRO" id="PR:Q7RTT6"/>
<dbReference type="Proteomes" id="UP000005640">
    <property type="component" value="Unplaced"/>
</dbReference>
<dbReference type="RNAct" id="Q7RTT6">
    <property type="molecule type" value="protein"/>
</dbReference>
<dbReference type="GO" id="GO:0005634">
    <property type="term" value="C:nucleus"/>
    <property type="evidence" value="ECO:0000318"/>
    <property type="project" value="GO_Central"/>
</dbReference>
<dbReference type="GO" id="GO:0006355">
    <property type="term" value="P:regulation of DNA-templated transcription"/>
    <property type="evidence" value="ECO:0007669"/>
    <property type="project" value="InterPro"/>
</dbReference>
<dbReference type="InterPro" id="IPR003655">
    <property type="entry name" value="aKRAB"/>
</dbReference>
<dbReference type="InterPro" id="IPR001909">
    <property type="entry name" value="KRAB"/>
</dbReference>
<dbReference type="InterPro" id="IPR036051">
    <property type="entry name" value="KRAB_dom_sf"/>
</dbReference>
<dbReference type="InterPro" id="IPR019041">
    <property type="entry name" value="SSXRD_motif"/>
</dbReference>
<dbReference type="PANTHER" id="PTHR14112:SF27">
    <property type="entry name" value="PROTEIN SSX6-RELATED"/>
    <property type="match status" value="1"/>
</dbReference>
<dbReference type="PANTHER" id="PTHR14112">
    <property type="entry name" value="SYNOVIAL SARCOMA, X MEMBER"/>
    <property type="match status" value="1"/>
</dbReference>
<dbReference type="Pfam" id="PF09514">
    <property type="entry name" value="SSXRD"/>
    <property type="match status" value="1"/>
</dbReference>
<dbReference type="SMART" id="SM00349">
    <property type="entry name" value="KRAB"/>
    <property type="match status" value="1"/>
</dbReference>
<dbReference type="SUPFAM" id="SSF109640">
    <property type="entry name" value="KRAB domain (Kruppel-associated box)"/>
    <property type="match status" value="1"/>
</dbReference>
<dbReference type="PROSITE" id="PS50806">
    <property type="entry name" value="KRAB_RELATED"/>
    <property type="match status" value="1"/>
</dbReference>
<protein>
    <recommendedName>
        <fullName>Putative protein SSX6</fullName>
    </recommendedName>
</protein>
<name>SSX6_HUMAN</name>
<reference key="1">
    <citation type="journal article" date="2005" name="Nature">
        <title>The DNA sequence of the human X chromosome.</title>
        <authorList>
            <person name="Ross M.T."/>
            <person name="Grafham D.V."/>
            <person name="Coffey A.J."/>
            <person name="Scherer S."/>
            <person name="McLay K."/>
            <person name="Muzny D."/>
            <person name="Platzer M."/>
            <person name="Howell G.R."/>
            <person name="Burrows C."/>
            <person name="Bird C.P."/>
            <person name="Frankish A."/>
            <person name="Lovell F.L."/>
            <person name="Howe K.L."/>
            <person name="Ashurst J.L."/>
            <person name="Fulton R.S."/>
            <person name="Sudbrak R."/>
            <person name="Wen G."/>
            <person name="Jones M.C."/>
            <person name="Hurles M.E."/>
            <person name="Andrews T.D."/>
            <person name="Scott C.E."/>
            <person name="Searle S."/>
            <person name="Ramser J."/>
            <person name="Whittaker A."/>
            <person name="Deadman R."/>
            <person name="Carter N.P."/>
            <person name="Hunt S.E."/>
            <person name="Chen R."/>
            <person name="Cree A."/>
            <person name="Gunaratne P."/>
            <person name="Havlak P."/>
            <person name="Hodgson A."/>
            <person name="Metzker M.L."/>
            <person name="Richards S."/>
            <person name="Scott G."/>
            <person name="Steffen D."/>
            <person name="Sodergren E."/>
            <person name="Wheeler D.A."/>
            <person name="Worley K.C."/>
            <person name="Ainscough R."/>
            <person name="Ambrose K.D."/>
            <person name="Ansari-Lari M.A."/>
            <person name="Aradhya S."/>
            <person name="Ashwell R.I."/>
            <person name="Babbage A.K."/>
            <person name="Bagguley C.L."/>
            <person name="Ballabio A."/>
            <person name="Banerjee R."/>
            <person name="Barker G.E."/>
            <person name="Barlow K.F."/>
            <person name="Barrett I.P."/>
            <person name="Bates K.N."/>
            <person name="Beare D.M."/>
            <person name="Beasley H."/>
            <person name="Beasley O."/>
            <person name="Beck A."/>
            <person name="Bethel G."/>
            <person name="Blechschmidt K."/>
            <person name="Brady N."/>
            <person name="Bray-Allen S."/>
            <person name="Bridgeman A.M."/>
            <person name="Brown A.J."/>
            <person name="Brown M.J."/>
            <person name="Bonnin D."/>
            <person name="Bruford E.A."/>
            <person name="Buhay C."/>
            <person name="Burch P."/>
            <person name="Burford D."/>
            <person name="Burgess J."/>
            <person name="Burrill W."/>
            <person name="Burton J."/>
            <person name="Bye J.M."/>
            <person name="Carder C."/>
            <person name="Carrel L."/>
            <person name="Chako J."/>
            <person name="Chapman J.C."/>
            <person name="Chavez D."/>
            <person name="Chen E."/>
            <person name="Chen G."/>
            <person name="Chen Y."/>
            <person name="Chen Z."/>
            <person name="Chinault C."/>
            <person name="Ciccodicola A."/>
            <person name="Clark S.Y."/>
            <person name="Clarke G."/>
            <person name="Clee C.M."/>
            <person name="Clegg S."/>
            <person name="Clerc-Blankenburg K."/>
            <person name="Clifford K."/>
            <person name="Cobley V."/>
            <person name="Cole C.G."/>
            <person name="Conquer J.S."/>
            <person name="Corby N."/>
            <person name="Connor R.E."/>
            <person name="David R."/>
            <person name="Davies J."/>
            <person name="Davis C."/>
            <person name="Davis J."/>
            <person name="Delgado O."/>
            <person name="Deshazo D."/>
            <person name="Dhami P."/>
            <person name="Ding Y."/>
            <person name="Dinh H."/>
            <person name="Dodsworth S."/>
            <person name="Draper H."/>
            <person name="Dugan-Rocha S."/>
            <person name="Dunham A."/>
            <person name="Dunn M."/>
            <person name="Durbin K.J."/>
            <person name="Dutta I."/>
            <person name="Eades T."/>
            <person name="Ellwood M."/>
            <person name="Emery-Cohen A."/>
            <person name="Errington H."/>
            <person name="Evans K.L."/>
            <person name="Faulkner L."/>
            <person name="Francis F."/>
            <person name="Frankland J."/>
            <person name="Fraser A.E."/>
            <person name="Galgoczy P."/>
            <person name="Gilbert J."/>
            <person name="Gill R."/>
            <person name="Gloeckner G."/>
            <person name="Gregory S.G."/>
            <person name="Gribble S."/>
            <person name="Griffiths C."/>
            <person name="Grocock R."/>
            <person name="Gu Y."/>
            <person name="Gwilliam R."/>
            <person name="Hamilton C."/>
            <person name="Hart E.A."/>
            <person name="Hawes A."/>
            <person name="Heath P.D."/>
            <person name="Heitmann K."/>
            <person name="Hennig S."/>
            <person name="Hernandez J."/>
            <person name="Hinzmann B."/>
            <person name="Ho S."/>
            <person name="Hoffs M."/>
            <person name="Howden P.J."/>
            <person name="Huckle E.J."/>
            <person name="Hume J."/>
            <person name="Hunt P.J."/>
            <person name="Hunt A.R."/>
            <person name="Isherwood J."/>
            <person name="Jacob L."/>
            <person name="Johnson D."/>
            <person name="Jones S."/>
            <person name="de Jong P.J."/>
            <person name="Joseph S.S."/>
            <person name="Keenan S."/>
            <person name="Kelly S."/>
            <person name="Kershaw J.K."/>
            <person name="Khan Z."/>
            <person name="Kioschis P."/>
            <person name="Klages S."/>
            <person name="Knights A.J."/>
            <person name="Kosiura A."/>
            <person name="Kovar-Smith C."/>
            <person name="Laird G.K."/>
            <person name="Langford C."/>
            <person name="Lawlor S."/>
            <person name="Leversha M."/>
            <person name="Lewis L."/>
            <person name="Liu W."/>
            <person name="Lloyd C."/>
            <person name="Lloyd D.M."/>
            <person name="Loulseged H."/>
            <person name="Loveland J.E."/>
            <person name="Lovell J.D."/>
            <person name="Lozado R."/>
            <person name="Lu J."/>
            <person name="Lyne R."/>
            <person name="Ma J."/>
            <person name="Maheshwari M."/>
            <person name="Matthews L.H."/>
            <person name="McDowall J."/>
            <person name="McLaren S."/>
            <person name="McMurray A."/>
            <person name="Meidl P."/>
            <person name="Meitinger T."/>
            <person name="Milne S."/>
            <person name="Miner G."/>
            <person name="Mistry S.L."/>
            <person name="Morgan M."/>
            <person name="Morris S."/>
            <person name="Mueller I."/>
            <person name="Mullikin J.C."/>
            <person name="Nguyen N."/>
            <person name="Nordsiek G."/>
            <person name="Nyakatura G."/>
            <person name="O'dell C.N."/>
            <person name="Okwuonu G."/>
            <person name="Palmer S."/>
            <person name="Pandian R."/>
            <person name="Parker D."/>
            <person name="Parrish J."/>
            <person name="Pasternak S."/>
            <person name="Patel D."/>
            <person name="Pearce A.V."/>
            <person name="Pearson D.M."/>
            <person name="Pelan S.E."/>
            <person name="Perez L."/>
            <person name="Porter K.M."/>
            <person name="Ramsey Y."/>
            <person name="Reichwald K."/>
            <person name="Rhodes S."/>
            <person name="Ridler K.A."/>
            <person name="Schlessinger D."/>
            <person name="Schueler M.G."/>
            <person name="Sehra H.K."/>
            <person name="Shaw-Smith C."/>
            <person name="Shen H."/>
            <person name="Sheridan E.M."/>
            <person name="Shownkeen R."/>
            <person name="Skuce C.D."/>
            <person name="Smith M.L."/>
            <person name="Sotheran E.C."/>
            <person name="Steingruber H.E."/>
            <person name="Steward C.A."/>
            <person name="Storey R."/>
            <person name="Swann R.M."/>
            <person name="Swarbreck D."/>
            <person name="Tabor P.E."/>
            <person name="Taudien S."/>
            <person name="Taylor T."/>
            <person name="Teague B."/>
            <person name="Thomas K."/>
            <person name="Thorpe A."/>
            <person name="Timms K."/>
            <person name="Tracey A."/>
            <person name="Trevanion S."/>
            <person name="Tromans A.C."/>
            <person name="d'Urso M."/>
            <person name="Verduzco D."/>
            <person name="Villasana D."/>
            <person name="Waldron L."/>
            <person name="Wall M."/>
            <person name="Wang Q."/>
            <person name="Warren J."/>
            <person name="Warry G.L."/>
            <person name="Wei X."/>
            <person name="West A."/>
            <person name="Whitehead S.L."/>
            <person name="Whiteley M.N."/>
            <person name="Wilkinson J.E."/>
            <person name="Willey D.L."/>
            <person name="Williams G."/>
            <person name="Williams L."/>
            <person name="Williamson A."/>
            <person name="Williamson H."/>
            <person name="Wilming L."/>
            <person name="Woodmansey R.L."/>
            <person name="Wray P.W."/>
            <person name="Yen J."/>
            <person name="Zhang J."/>
            <person name="Zhou J."/>
            <person name="Zoghbi H."/>
            <person name="Zorilla S."/>
            <person name="Buck D."/>
            <person name="Reinhardt R."/>
            <person name="Poustka A."/>
            <person name="Rosenthal A."/>
            <person name="Lehrach H."/>
            <person name="Meindl A."/>
            <person name="Minx P.J."/>
            <person name="Hillier L.W."/>
            <person name="Willard H.F."/>
            <person name="Wilson R.K."/>
            <person name="Waterston R.H."/>
            <person name="Rice C.M."/>
            <person name="Vaudin M."/>
            <person name="Coulson A."/>
            <person name="Nelson D.L."/>
            <person name="Weinstock G."/>
            <person name="Sulston J.E."/>
            <person name="Durbin R.M."/>
            <person name="Hubbard T."/>
            <person name="Gibbs R.A."/>
            <person name="Beck S."/>
            <person name="Rogers J."/>
            <person name="Bentley D.R."/>
        </authorList>
    </citation>
    <scope>NUCLEOTIDE SEQUENCE [LARGE SCALE GENOMIC DNA]</scope>
</reference>
<reference key="2">
    <citation type="journal article" date="2002" name="Int. J. Cancer">
        <title>The SSX gene family: characterization of 9 complete genes.</title>
        <authorList>
            <person name="Gure A.O."/>
            <person name="Wei I.J."/>
            <person name="Old L.J."/>
            <person name="Chen Y.-T."/>
        </authorList>
    </citation>
    <scope>IDENTIFICATION</scope>
    <scope>TISSUE SPECIFICITY</scope>
</reference>